<keyword id="KW-1015">Disulfide bond</keyword>
<keyword id="KW-0274">FAD</keyword>
<keyword id="KW-0285">Flavoprotein</keyword>
<keyword id="KW-0521">NADP</keyword>
<keyword id="KW-0560">Oxidoreductase</keyword>
<keyword id="KW-0676">Redox-active center</keyword>
<keyword id="KW-0843">Virulence</keyword>
<evidence type="ECO:0000250" key="1">
    <source>
        <dbReference type="UniProtKB" id="E9RAH5"/>
    </source>
</evidence>
<evidence type="ECO:0000269" key="2">
    <source>
    </source>
</evidence>
<evidence type="ECO:0000269" key="3">
    <source>
    </source>
</evidence>
<evidence type="ECO:0000269" key="4">
    <source>
    </source>
</evidence>
<evidence type="ECO:0000269" key="5">
    <source>
    </source>
</evidence>
<evidence type="ECO:0000269" key="6">
    <source>
    </source>
</evidence>
<evidence type="ECO:0000303" key="7">
    <source>
    </source>
</evidence>
<evidence type="ECO:0000305" key="8"/>
<evidence type="ECO:0000305" key="9">
    <source>
    </source>
</evidence>
<evidence type="ECO:0000305" key="10">
    <source>
    </source>
</evidence>
<gene>
    <name evidence="7" type="primary">sirT</name>
</gene>
<name>SIRT_LEPMC</name>
<sequence length="327" mass="35185">MATCPSIFDALVIGAGPAGLSAALALGRVMRTAAIFDTGVFRNAPANHMHTVPTWDHQSPVAYRQQCITELRQRYNGTIHFANTGVASVKAGKDSDYVVTDEAGKTWMGRKVILATGVKDVMPDVKGYAQAWGRYIFHCLFCHGFEQRGSESAGLLVLDKTILSTEIEIAVHFGHLALQFAKKITVFLDGHVEFLEDPRIKGLEAQGFLINPKPISKITYAADPEPGFATVHLEDGSEENMSFLVHRPRTLLAGDFANQLGLELTEAGDVKTTPPFYETSVKGVFAAGDCAVPLKQVVWAVSTGVSAGSGVNFQCLGADMAARSKLS</sequence>
<reference key="1">
    <citation type="journal article" date="2004" name="Mol. Microbiol.">
        <title>The sirodesmin biosynthetic gene cluster of the plant pathogenic fungus Leptosphaeria maculans.</title>
        <authorList>
            <person name="Gardiner D.M."/>
            <person name="Cozijnsen A.J."/>
            <person name="Wilson L.M."/>
            <person name="Pedras M.S."/>
            <person name="Howlett B.J."/>
        </authorList>
    </citation>
    <scope>NUCLEOTIDE SEQUENCE [GENOMIC DNA]</scope>
    <scope>FUNCTION</scope>
    <scope>INDUCTION</scope>
</reference>
<reference key="2">
    <citation type="journal article" date="2008" name="Mycol. Res.">
        <title>Biosynthetic gene clusters for epipolythiodioxopiperazines in filamentous fungi.</title>
        <authorList>
            <person name="Fox E.M."/>
            <person name="Howlett B.J."/>
        </authorList>
    </citation>
    <scope>FUNCTION</scope>
</reference>
<reference key="3">
    <citation type="journal article" date="2010" name="Microbiology">
        <title>A tyrosine O-prenyltransferase catalyses the first pathway-specific step in the biosynthesis of sirodesmin PL.</title>
        <authorList>
            <person name="Kremer A."/>
            <person name="Li S.M."/>
        </authorList>
    </citation>
    <scope>FUNCTION</scope>
</reference>
<reference key="4">
    <citation type="journal article" date="2011" name="Appl. Microbiol. Biotechnol.">
        <title>The tyrosine O-prenyltransferase SirD catalyzes O-, N-, and C-prenylations.</title>
        <authorList>
            <person name="Zou H.X."/>
            <person name="Xie X."/>
            <person name="Zheng X.D."/>
            <person name="Li S.M."/>
        </authorList>
    </citation>
    <scope>FUNCTION</scope>
</reference>
<reference key="5">
    <citation type="journal article" date="2013" name="ACS Chem. Biol.">
        <title>Tyrosine O-prenyltransferase SirD catalyzes S-, C-, and N-prenylations on tyrosine and tryptophan derivatives.</title>
        <authorList>
            <person name="Rudolf J.D."/>
            <person name="Poulter C.D."/>
        </authorList>
    </citation>
    <scope>FUNCTION</scope>
</reference>
<reference key="6">
    <citation type="journal article" date="2016" name="PLoS ONE">
        <title>The epipolythiodiketopiperazine gene cluster in Claviceps purpurea: dysfunctional cytochrome P450 enzyme prevents formation of the previously unknown clapurines.</title>
        <authorList>
            <person name="Dopstadt J."/>
            <person name="Neubauer L."/>
            <person name="Tudzynski P."/>
            <person name="Humpf H.U."/>
        </authorList>
    </citation>
    <scope>FUNCTION</scope>
</reference>
<comment type="function">
    <text evidence="3 4 5 6 9 10">Thioredoxin reductase; part of the gene cluster that mediates the biosynthesis of sirodesmin PL, an epipolythiodioxopiperazine (ETP) characterized by a disulfide bridged cyclic dipeptide and that acts as a phytotoxin which is involved in the blackleg didease of canola (PubMed:15387811, PubMed:18272357, PubMed:19762440). SirD catalyzes the O-prenylation of L-tyrosine (L-Tyr) in the presence of dimethylallyl diphosphate (DMAPP) to yield 4-O-dimethylallyl-L-Tyr, and therefore represents probably the first pathway-specific enzyme in the biosynthesis of sirodesmin PL (PubMed:19762440, PubMed:21038099, PubMed:24083562). 4-O-dimethylallyl-L-Tyr, then undergoes condensation with L-Ser in a reaction catalyzed by the non-ribosomal peptide synthase sirP to form the diketopiperazine (DKP) backbone (PubMed:18272357). Further bishydroxylation of the DKP performed by the cytochrome P450 monooxygenase sirC leads to the production of the intermediate phomamide (PubMed:27390873). This step is essential to form the reactive thiol group required for toxicity of sirodesmin PL (PubMed:27390873). The next steps of sirodesmin biosynthesis are not well understood yet, but some predictions could be made from intermediate compounds identification (PubMed:18272357). Phomamide is converted into phomalizarine via oxidation, probably by sirT (PubMed:18272357). Further oxidation, methylation (by sirM or sirN) and reduction steps convert phomalizarine to deacetyl sirodesmin (PubMed:18272357). Finally, acetyltransferase sirH probably acetylates deacetyl sirodesmin to produce sirodesmin PL (PubMed:18272357).</text>
</comment>
<comment type="cofactor">
    <cofactor evidence="1">
        <name>FAD</name>
        <dbReference type="ChEBI" id="CHEBI:57692"/>
    </cofactor>
    <text evidence="1">Binds 1 FAD per subunit.</text>
</comment>
<comment type="pathway">
    <text evidence="9">Mycotoxin biosynthesis.</text>
</comment>
<comment type="subunit">
    <text evidence="1">Homodimer (By similarity).</text>
</comment>
<comment type="induction">
    <text evidence="2">Expression is co-regulated with the other genes from the sirodesmin cluster and corresponds with sirodesmin production (PubMed:15387811).</text>
</comment>
<comment type="similarity">
    <text evidence="8">Belongs to the class-II pyridine nucleotide-disulfide oxidoreductase family.</text>
</comment>
<dbReference type="EC" id="1.8.1.-" evidence="9"/>
<dbReference type="EMBL" id="AY553235">
    <property type="protein sequence ID" value="AAS92555.1"/>
    <property type="molecule type" value="Genomic_DNA"/>
</dbReference>
<dbReference type="RefSeq" id="XP_003842410.1">
    <property type="nucleotide sequence ID" value="XM_003842362.1"/>
</dbReference>
<dbReference type="SMR" id="Q6Q873"/>
<dbReference type="OMA" id="NWFTPYI"/>
<dbReference type="GO" id="GO:0016491">
    <property type="term" value="F:oxidoreductase activity"/>
    <property type="evidence" value="ECO:0007669"/>
    <property type="project" value="UniProtKB-KW"/>
</dbReference>
<dbReference type="GO" id="GO:0097237">
    <property type="term" value="P:cellular response to toxic substance"/>
    <property type="evidence" value="ECO:0007669"/>
    <property type="project" value="UniProtKB-ARBA"/>
</dbReference>
<dbReference type="Gene3D" id="3.50.50.60">
    <property type="entry name" value="FAD/NAD(P)-binding domain"/>
    <property type="match status" value="2"/>
</dbReference>
<dbReference type="InterPro" id="IPR036188">
    <property type="entry name" value="FAD/NAD-bd_sf"/>
</dbReference>
<dbReference type="InterPro" id="IPR023753">
    <property type="entry name" value="FAD/NAD-binding_dom"/>
</dbReference>
<dbReference type="InterPro" id="IPR050097">
    <property type="entry name" value="Ferredoxin-NADP_redctase_2"/>
</dbReference>
<dbReference type="PANTHER" id="PTHR48105">
    <property type="entry name" value="THIOREDOXIN REDUCTASE 1-RELATED-RELATED"/>
    <property type="match status" value="1"/>
</dbReference>
<dbReference type="Pfam" id="PF07992">
    <property type="entry name" value="Pyr_redox_2"/>
    <property type="match status" value="2"/>
</dbReference>
<dbReference type="PRINTS" id="PR00368">
    <property type="entry name" value="FADPNR"/>
</dbReference>
<dbReference type="PRINTS" id="PR00469">
    <property type="entry name" value="PNDRDTASEII"/>
</dbReference>
<dbReference type="SUPFAM" id="SSF51905">
    <property type="entry name" value="FAD/NAD(P)-binding domain"/>
    <property type="match status" value="1"/>
</dbReference>
<feature type="chain" id="PRO_0000437711" description="Thioredoxin reductase sirT">
    <location>
        <begin position="1"/>
        <end position="327"/>
    </location>
</feature>
<feature type="binding site" evidence="1">
    <location>
        <begin position="15"/>
        <end position="18"/>
    </location>
    <ligand>
        <name>FAD</name>
        <dbReference type="ChEBI" id="CHEBI:57692"/>
    </ligand>
</feature>
<feature type="binding site" evidence="1">
    <location>
        <begin position="37"/>
        <end position="42"/>
    </location>
    <ligand>
        <name>FAD</name>
        <dbReference type="ChEBI" id="CHEBI:57692"/>
    </ligand>
</feature>
<feature type="binding site" evidence="1">
    <location>
        <position position="50"/>
    </location>
    <ligand>
        <name>FAD</name>
        <dbReference type="ChEBI" id="CHEBI:57692"/>
    </ligand>
</feature>
<feature type="binding site" evidence="1">
    <location>
        <position position="115"/>
    </location>
    <ligand>
        <name>FAD</name>
        <dbReference type="ChEBI" id="CHEBI:57692"/>
    </ligand>
</feature>
<feature type="binding site" evidence="1">
    <location>
        <position position="289"/>
    </location>
    <ligand>
        <name>FAD</name>
        <dbReference type="ChEBI" id="CHEBI:57692"/>
    </ligand>
</feature>
<feature type="binding site" evidence="1">
    <location>
        <begin position="296"/>
        <end position="297"/>
    </location>
    <ligand>
        <name>FAD</name>
        <dbReference type="ChEBI" id="CHEBI:57692"/>
    </ligand>
</feature>
<feature type="disulfide bond" description="Redox-active" evidence="1">
    <location>
        <begin position="139"/>
        <end position="142"/>
    </location>
</feature>
<proteinExistence type="evidence at transcript level"/>
<protein>
    <recommendedName>
        <fullName evidence="7">Thioredoxin reductase sirT</fullName>
        <ecNumber evidence="9">1.8.1.-</ecNumber>
    </recommendedName>
    <alternativeName>
        <fullName evidence="7">Sirodesmin biosynthesis protein T</fullName>
    </alternativeName>
</protein>
<organism>
    <name type="scientific">Leptosphaeria maculans</name>
    <name type="common">Blackleg fungus</name>
    <name type="synonym">Phoma lingam</name>
    <dbReference type="NCBI Taxonomy" id="5022"/>
    <lineage>
        <taxon>Eukaryota</taxon>
        <taxon>Fungi</taxon>
        <taxon>Dikarya</taxon>
        <taxon>Ascomycota</taxon>
        <taxon>Pezizomycotina</taxon>
        <taxon>Dothideomycetes</taxon>
        <taxon>Pleosporomycetidae</taxon>
        <taxon>Pleosporales</taxon>
        <taxon>Pleosporineae</taxon>
        <taxon>Leptosphaeriaceae</taxon>
        <taxon>Plenodomus</taxon>
        <taxon>Plenodomus lingam/Leptosphaeria maculans species complex</taxon>
    </lineage>
</organism>
<accession>Q6Q873</accession>